<protein>
    <recommendedName>
        <fullName evidence="1">UPF0262 protein RHECIAT_CH0000657</fullName>
    </recommendedName>
</protein>
<evidence type="ECO:0000255" key="1">
    <source>
        <dbReference type="HAMAP-Rule" id="MF_00678"/>
    </source>
</evidence>
<comment type="similarity">
    <text evidence="1">Belongs to the UPF0262 family.</text>
</comment>
<proteinExistence type="inferred from homology"/>
<feature type="chain" id="PRO_1000131650" description="UPF0262 protein RHECIAT_CH0000657">
    <location>
        <begin position="1"/>
        <end position="157"/>
    </location>
</feature>
<gene>
    <name type="ordered locus">RHECIAT_CH0000657</name>
</gene>
<sequence>MAAGDFRLCDVVLDDTIGRSTPDVEHERAVAIFDLIEENSFAPIGHAGGPYRLNISLADSKLVFAITTEDGGNVATHILSLTPFRRIVKDYFMICESYYEAIRSATPSRIEAIDMGRRGIHNEGSQTLKDRLTGKIEIDFDTARRLFTLVCVLYWRG</sequence>
<organism>
    <name type="scientific">Rhizobium etli (strain CIAT 652)</name>
    <dbReference type="NCBI Taxonomy" id="491916"/>
    <lineage>
        <taxon>Bacteria</taxon>
        <taxon>Pseudomonadati</taxon>
        <taxon>Pseudomonadota</taxon>
        <taxon>Alphaproteobacteria</taxon>
        <taxon>Hyphomicrobiales</taxon>
        <taxon>Rhizobiaceae</taxon>
        <taxon>Rhizobium/Agrobacterium group</taxon>
        <taxon>Rhizobium</taxon>
    </lineage>
</organism>
<reference key="1">
    <citation type="journal article" date="2010" name="Appl. Environ. Microbiol.">
        <title>Conserved symbiotic plasmid DNA sequences in the multireplicon pangenomic structure of Rhizobium etli.</title>
        <authorList>
            <person name="Gonzalez V."/>
            <person name="Acosta J.L."/>
            <person name="Santamaria R.I."/>
            <person name="Bustos P."/>
            <person name="Fernandez J.L."/>
            <person name="Hernandez Gonzalez I.L."/>
            <person name="Diaz R."/>
            <person name="Flores M."/>
            <person name="Palacios R."/>
            <person name="Mora J."/>
            <person name="Davila G."/>
        </authorList>
    </citation>
    <scope>NUCLEOTIDE SEQUENCE [LARGE SCALE GENOMIC DNA]</scope>
    <source>
        <strain>CIAT 652</strain>
    </source>
</reference>
<accession>B3PNT4</accession>
<name>Y657_RHIE6</name>
<dbReference type="EMBL" id="CP001074">
    <property type="protein sequence ID" value="ACE89647.1"/>
    <property type="molecule type" value="Genomic_DNA"/>
</dbReference>
<dbReference type="KEGG" id="rec:RHECIAT_CH0000657"/>
<dbReference type="eggNOG" id="COG5328">
    <property type="taxonomic scope" value="Bacteria"/>
</dbReference>
<dbReference type="HOGENOM" id="CLU_112904_0_0_5"/>
<dbReference type="Proteomes" id="UP000008817">
    <property type="component" value="Chromosome"/>
</dbReference>
<dbReference type="HAMAP" id="MF_00678">
    <property type="entry name" value="UPF0262"/>
    <property type="match status" value="1"/>
</dbReference>
<dbReference type="InterPro" id="IPR008321">
    <property type="entry name" value="UCP032146"/>
</dbReference>
<dbReference type="NCBIfam" id="NF002769">
    <property type="entry name" value="PRK02853.1"/>
    <property type="match status" value="1"/>
</dbReference>
<dbReference type="Pfam" id="PF06793">
    <property type="entry name" value="UPF0262"/>
    <property type="match status" value="1"/>
</dbReference>
<dbReference type="PIRSF" id="PIRSF032146">
    <property type="entry name" value="UCP032146"/>
    <property type="match status" value="1"/>
</dbReference>